<evidence type="ECO:0000255" key="1">
    <source>
        <dbReference type="PROSITE-ProRule" id="PRU00457"/>
    </source>
</evidence>
<evidence type="ECO:0000305" key="2"/>
<reference key="1">
    <citation type="journal article" date="1995" name="Nucleic Acids Res.">
        <title>Analysis of the Escherichia coli genome VI: DNA sequence of the region from 92.8 through 100 minutes.</title>
        <authorList>
            <person name="Burland V.D."/>
            <person name="Plunkett G. III"/>
            <person name="Sofia H.J."/>
            <person name="Daniels D.L."/>
            <person name="Blattner F.R."/>
        </authorList>
    </citation>
    <scope>NUCLEOTIDE SEQUENCE [LARGE SCALE GENOMIC DNA]</scope>
    <source>
        <strain>K12 / MG1655 / ATCC 47076</strain>
    </source>
</reference>
<reference key="2">
    <citation type="journal article" date="1997" name="Science">
        <title>The complete genome sequence of Escherichia coli K-12.</title>
        <authorList>
            <person name="Blattner F.R."/>
            <person name="Plunkett G. III"/>
            <person name="Bloch C.A."/>
            <person name="Perna N.T."/>
            <person name="Burland V."/>
            <person name="Riley M."/>
            <person name="Collado-Vides J."/>
            <person name="Glasner J.D."/>
            <person name="Rode C.K."/>
            <person name="Mayhew G.F."/>
            <person name="Gregor J."/>
            <person name="Davis N.W."/>
            <person name="Kirkpatrick H.A."/>
            <person name="Goeden M.A."/>
            <person name="Rose D.J."/>
            <person name="Mau B."/>
            <person name="Shao Y."/>
        </authorList>
    </citation>
    <scope>NUCLEOTIDE SEQUENCE [LARGE SCALE GENOMIC DNA]</scope>
    <source>
        <strain>K12 / MG1655 / ATCC 47076</strain>
    </source>
</reference>
<reference key="3">
    <citation type="journal article" date="2006" name="Mol. Syst. Biol.">
        <title>Highly accurate genome sequences of Escherichia coli K-12 strains MG1655 and W3110.</title>
        <authorList>
            <person name="Hayashi K."/>
            <person name="Morooka N."/>
            <person name="Yamamoto Y."/>
            <person name="Fujita K."/>
            <person name="Isono K."/>
            <person name="Choi S."/>
            <person name="Ohtsubo E."/>
            <person name="Baba T."/>
            <person name="Wanner B.L."/>
            <person name="Mori H."/>
            <person name="Horiuchi T."/>
        </authorList>
    </citation>
    <scope>NUCLEOTIDE SEQUENCE [LARGE SCALE GENOMIC DNA]</scope>
    <source>
        <strain>K12 / W3110 / ATCC 27325 / DSM 5911</strain>
    </source>
</reference>
<comment type="function">
    <text evidence="2">Required for the transposition of the insertion element.</text>
</comment>
<comment type="similarity">
    <text evidence="2">Belongs to the transposase IS30 family.</text>
</comment>
<protein>
    <recommendedName>
        <fullName>Transposase InsI for insertion sequence element IS30D</fullName>
    </recommendedName>
</protein>
<feature type="chain" id="PRO_0000394136" description="Transposase InsI for insertion sequence element IS30D">
    <location>
        <begin position="1"/>
        <end position="383"/>
    </location>
</feature>
<feature type="domain" description="Integrase catalytic" evidence="1">
    <location>
        <begin position="213"/>
        <end position="379"/>
    </location>
</feature>
<sequence length="383" mass="44281">MRRTFTAEEKASVFELWKNGTGFSEIANILGSKPGTIFTMLRDTGGIKPHERKRAVAHLTLSEREEIRAGLSAKMSIRAIATALNRSPSTISREVQRNRGRRYYKAVDANNRANRMAKRPKPCLLDQNLPLRKLVLEKLEMKWSPEQISGWLRRTKPRQKTLRISPETIYKTLYFRSREALHHLNIQHLRRSHSLRHGRRHTRKGERGTINIVNGTPIHERSRNIDNRRSLGHWEGDLVSGTKNSHIATLVDRKSRYTIILRLRGKDSVSVNQALTDKFLSLPSELRKSLTWDRGMELARHLEFTVSTGVKVYFCDPQSPWQRGTNENTNGLIRQYFPKKTCLAQYTQHELDLVAAQLNNRPRKTLKFKTPKEIIERGVALTD</sequence>
<organism>
    <name type="scientific">Escherichia coli (strain K12)</name>
    <dbReference type="NCBI Taxonomy" id="83333"/>
    <lineage>
        <taxon>Bacteria</taxon>
        <taxon>Pseudomonadati</taxon>
        <taxon>Pseudomonadota</taxon>
        <taxon>Gammaproteobacteria</taxon>
        <taxon>Enterobacterales</taxon>
        <taxon>Enterobacteriaceae</taxon>
        <taxon>Escherichia</taxon>
    </lineage>
</organism>
<name>INSI4_ECOLI</name>
<dbReference type="EMBL" id="U14003">
    <property type="protein sequence ID" value="AAA97180.1"/>
    <property type="molecule type" value="Genomic_DNA"/>
</dbReference>
<dbReference type="EMBL" id="U00096">
    <property type="protein sequence ID" value="AAC77240.1"/>
    <property type="molecule type" value="Genomic_DNA"/>
</dbReference>
<dbReference type="EMBL" id="AP009048">
    <property type="protein sequence ID" value="BAE78276.1"/>
    <property type="molecule type" value="Genomic_DNA"/>
</dbReference>
<dbReference type="PIR" id="F65241">
    <property type="entry name" value="F65241"/>
</dbReference>
<dbReference type="RefSeq" id="WP_001254932.1">
    <property type="nucleotide sequence ID" value="NZ_SSUR01000046.1"/>
</dbReference>
<dbReference type="FunCoup" id="P0CF90">
    <property type="interactions" value="2"/>
</dbReference>
<dbReference type="EnsemblBacteria" id="AAC77240">
    <property type="protein sequence ID" value="AAC77240"/>
    <property type="gene ID" value="b4284"/>
</dbReference>
<dbReference type="KEGG" id="ecj:JW4244"/>
<dbReference type="KEGG" id="eco:b1404"/>
<dbReference type="KEGG" id="eco:b4284"/>
<dbReference type="KEGG" id="ecoc:C3026_23100"/>
<dbReference type="PATRIC" id="fig|511145.12.peg.1467"/>
<dbReference type="EchoBASE" id="EB4726"/>
<dbReference type="HOGENOM" id="CLU_035706_0_0_6"/>
<dbReference type="InParanoid" id="P0CF90"/>
<dbReference type="OMA" id="MWERWRK"/>
<dbReference type="OrthoDB" id="9803231at2"/>
<dbReference type="PhylomeDB" id="P0CF90"/>
<dbReference type="BioCyc" id="EcoCyc:MONOMER0-4233"/>
<dbReference type="PRO" id="PR:P0CF90"/>
<dbReference type="Proteomes" id="UP000000625">
    <property type="component" value="Chromosome"/>
</dbReference>
<dbReference type="GO" id="GO:0003677">
    <property type="term" value="F:DNA binding"/>
    <property type="evidence" value="ECO:0007669"/>
    <property type="project" value="UniProtKB-KW"/>
</dbReference>
<dbReference type="GO" id="GO:0004803">
    <property type="term" value="F:transposase activity"/>
    <property type="evidence" value="ECO:0000318"/>
    <property type="project" value="GO_Central"/>
</dbReference>
<dbReference type="GO" id="GO:0015074">
    <property type="term" value="P:DNA integration"/>
    <property type="evidence" value="ECO:0007669"/>
    <property type="project" value="InterPro"/>
</dbReference>
<dbReference type="GO" id="GO:0006313">
    <property type="term" value="P:DNA transposition"/>
    <property type="evidence" value="ECO:0007669"/>
    <property type="project" value="InterPro"/>
</dbReference>
<dbReference type="GO" id="GO:0032196">
    <property type="term" value="P:transposition"/>
    <property type="evidence" value="ECO:0000318"/>
    <property type="project" value="GO_Central"/>
</dbReference>
<dbReference type="FunFam" id="3.30.420.10:FF:000038">
    <property type="entry name" value="IS30-like element IS30 family transposase"/>
    <property type="match status" value="1"/>
</dbReference>
<dbReference type="Gene3D" id="1.10.10.60">
    <property type="entry name" value="Homeodomain-like"/>
    <property type="match status" value="1"/>
</dbReference>
<dbReference type="Gene3D" id="3.30.420.10">
    <property type="entry name" value="Ribonuclease H-like superfamily/Ribonuclease H"/>
    <property type="match status" value="1"/>
</dbReference>
<dbReference type="InterPro" id="IPR001584">
    <property type="entry name" value="Integrase_cat-core"/>
</dbReference>
<dbReference type="InterPro" id="IPR025246">
    <property type="entry name" value="IS30-like_HTH"/>
</dbReference>
<dbReference type="InterPro" id="IPR012337">
    <property type="entry name" value="RNaseH-like_sf"/>
</dbReference>
<dbReference type="InterPro" id="IPR036397">
    <property type="entry name" value="RNaseH_sf"/>
</dbReference>
<dbReference type="InterPro" id="IPR051917">
    <property type="entry name" value="Transposase-Integrase"/>
</dbReference>
<dbReference type="InterPro" id="IPR053392">
    <property type="entry name" value="Transposase_IS30-like"/>
</dbReference>
<dbReference type="InterPro" id="IPR001598">
    <property type="entry name" value="Transposase_IS30_CS"/>
</dbReference>
<dbReference type="NCBIfam" id="NF033563">
    <property type="entry name" value="transpos_IS30"/>
    <property type="match status" value="1"/>
</dbReference>
<dbReference type="PANTHER" id="PTHR10948">
    <property type="entry name" value="TRANSPOSASE"/>
    <property type="match status" value="1"/>
</dbReference>
<dbReference type="PANTHER" id="PTHR10948:SF23">
    <property type="entry name" value="TRANSPOSASE INSI FOR INSERTION SEQUENCE ELEMENT IS30A-RELATED"/>
    <property type="match status" value="1"/>
</dbReference>
<dbReference type="Pfam" id="PF13936">
    <property type="entry name" value="HTH_38"/>
    <property type="match status" value="1"/>
</dbReference>
<dbReference type="Pfam" id="PF00665">
    <property type="entry name" value="rve"/>
    <property type="match status" value="1"/>
</dbReference>
<dbReference type="SUPFAM" id="SSF53098">
    <property type="entry name" value="Ribonuclease H-like"/>
    <property type="match status" value="1"/>
</dbReference>
<dbReference type="PROSITE" id="PS50994">
    <property type="entry name" value="INTEGRASE"/>
    <property type="match status" value="1"/>
</dbReference>
<dbReference type="PROSITE" id="PS01043">
    <property type="entry name" value="TRANSPOSASE_IS30"/>
    <property type="match status" value="1"/>
</dbReference>
<accession>P0CF90</accession>
<accession>P37246</accession>
<accession>P77341</accession>
<accession>Q2M630</accession>
<accession>Q2MCF8</accession>
<gene>
    <name type="primary">insI4</name>
    <name type="ordered locus">b4284</name>
    <name type="ordered locus">JW4244</name>
</gene>
<proteinExistence type="inferred from homology"/>
<keyword id="KW-0233">DNA recombination</keyword>
<keyword id="KW-0238">DNA-binding</keyword>
<keyword id="KW-1185">Reference proteome</keyword>
<keyword id="KW-0814">Transposable element</keyword>
<keyword id="KW-0815">Transposition</keyword>